<dbReference type="EMBL" id="AE017194">
    <property type="protein sequence ID" value="AAS43291.1"/>
    <property type="status" value="ALT_INIT"/>
    <property type="molecule type" value="Genomic_DNA"/>
</dbReference>
<dbReference type="SMR" id="Q730M6"/>
<dbReference type="KEGG" id="bca:BCE_4390"/>
<dbReference type="HOGENOM" id="CLU_159258_3_0_9"/>
<dbReference type="Proteomes" id="UP000002527">
    <property type="component" value="Chromosome"/>
</dbReference>
<dbReference type="GO" id="GO:1990904">
    <property type="term" value="C:ribonucleoprotein complex"/>
    <property type="evidence" value="ECO:0007669"/>
    <property type="project" value="UniProtKB-KW"/>
</dbReference>
<dbReference type="GO" id="GO:0005840">
    <property type="term" value="C:ribosome"/>
    <property type="evidence" value="ECO:0007669"/>
    <property type="project" value="UniProtKB-KW"/>
</dbReference>
<dbReference type="GO" id="GO:0003735">
    <property type="term" value="F:structural constituent of ribosome"/>
    <property type="evidence" value="ECO:0007669"/>
    <property type="project" value="InterPro"/>
</dbReference>
<dbReference type="GO" id="GO:0006412">
    <property type="term" value="P:translation"/>
    <property type="evidence" value="ECO:0007669"/>
    <property type="project" value="UniProtKB-UniRule"/>
</dbReference>
<dbReference type="Gene3D" id="1.20.5.1150">
    <property type="entry name" value="Ribosomal protein S8"/>
    <property type="match status" value="1"/>
</dbReference>
<dbReference type="HAMAP" id="MF_00358">
    <property type="entry name" value="Ribosomal_bS21"/>
    <property type="match status" value="1"/>
</dbReference>
<dbReference type="InterPro" id="IPR001911">
    <property type="entry name" value="Ribosomal_bS21"/>
</dbReference>
<dbReference type="InterPro" id="IPR018278">
    <property type="entry name" value="Ribosomal_bS21_CS"/>
</dbReference>
<dbReference type="InterPro" id="IPR038380">
    <property type="entry name" value="Ribosomal_bS21_sf"/>
</dbReference>
<dbReference type="NCBIfam" id="TIGR00030">
    <property type="entry name" value="S21p"/>
    <property type="match status" value="1"/>
</dbReference>
<dbReference type="PANTHER" id="PTHR21109">
    <property type="entry name" value="MITOCHONDRIAL 28S RIBOSOMAL PROTEIN S21"/>
    <property type="match status" value="1"/>
</dbReference>
<dbReference type="PANTHER" id="PTHR21109:SF22">
    <property type="entry name" value="SMALL RIBOSOMAL SUBUNIT PROTEIN BS21"/>
    <property type="match status" value="1"/>
</dbReference>
<dbReference type="Pfam" id="PF01165">
    <property type="entry name" value="Ribosomal_S21"/>
    <property type="match status" value="1"/>
</dbReference>
<dbReference type="PRINTS" id="PR00976">
    <property type="entry name" value="RIBOSOMALS21"/>
</dbReference>
<dbReference type="PROSITE" id="PS01181">
    <property type="entry name" value="RIBOSOMAL_S21"/>
    <property type="match status" value="1"/>
</dbReference>
<reference key="1">
    <citation type="journal article" date="2004" name="Nucleic Acids Res.">
        <title>The genome sequence of Bacillus cereus ATCC 10987 reveals metabolic adaptations and a large plasmid related to Bacillus anthracis pXO1.</title>
        <authorList>
            <person name="Rasko D.A."/>
            <person name="Ravel J."/>
            <person name="Oekstad O.A."/>
            <person name="Helgason E."/>
            <person name="Cer R.Z."/>
            <person name="Jiang L."/>
            <person name="Shores K.A."/>
            <person name="Fouts D.E."/>
            <person name="Tourasse N.J."/>
            <person name="Angiuoli S.V."/>
            <person name="Kolonay J.F."/>
            <person name="Nelson W.C."/>
            <person name="Kolstoe A.-B."/>
            <person name="Fraser C.M."/>
            <person name="Read T.D."/>
        </authorList>
    </citation>
    <scope>NUCLEOTIDE SEQUENCE [LARGE SCALE GENOMIC DNA]</scope>
    <source>
        <strain>ATCC 10987 / NRS 248</strain>
    </source>
</reference>
<gene>
    <name evidence="1" type="primary">rpsU</name>
    <name type="ordered locus">BCE_4390</name>
</gene>
<proteinExistence type="inferred from homology"/>
<name>RS21_BACC1</name>
<evidence type="ECO:0000255" key="1">
    <source>
        <dbReference type="HAMAP-Rule" id="MF_00358"/>
    </source>
</evidence>
<evidence type="ECO:0000305" key="2"/>
<organism>
    <name type="scientific">Bacillus cereus (strain ATCC 10987 / NRS 248)</name>
    <dbReference type="NCBI Taxonomy" id="222523"/>
    <lineage>
        <taxon>Bacteria</taxon>
        <taxon>Bacillati</taxon>
        <taxon>Bacillota</taxon>
        <taxon>Bacilli</taxon>
        <taxon>Bacillales</taxon>
        <taxon>Bacillaceae</taxon>
        <taxon>Bacillus</taxon>
        <taxon>Bacillus cereus group</taxon>
    </lineage>
</organism>
<protein>
    <recommendedName>
        <fullName evidence="1">Small ribosomal subunit protein bS21</fullName>
    </recommendedName>
    <alternativeName>
        <fullName evidence="2">30S ribosomal protein S21</fullName>
    </alternativeName>
</protein>
<keyword id="KW-0687">Ribonucleoprotein</keyword>
<keyword id="KW-0689">Ribosomal protein</keyword>
<comment type="similarity">
    <text evidence="1">Belongs to the bacterial ribosomal protein bS21 family.</text>
</comment>
<comment type="sequence caution" evidence="2">
    <conflict type="erroneous initiation">
        <sequence resource="EMBL-CDS" id="AAS43291"/>
    </conflict>
</comment>
<accession>Q730M6</accession>
<sequence>MSKTVVRKNESLEDALRRFKRSVSKTGTLAEARKREFYEKPSVKRKKKSEAARKRKF</sequence>
<feature type="chain" id="PRO_0000178294" description="Small ribosomal subunit protein bS21">
    <location>
        <begin position="1"/>
        <end position="57"/>
    </location>
</feature>